<feature type="chain" id="PRO_0000070285" description="Cholinesterase">
    <location>
        <begin position="1"/>
        <end position="574"/>
    </location>
</feature>
<feature type="active site" description="Acyl-ester intermediate" evidence="3">
    <location>
        <position position="198"/>
    </location>
</feature>
<feature type="active site" description="Charge relay system" evidence="1">
    <location>
        <position position="325"/>
    </location>
</feature>
<feature type="active site" description="Charge relay system" evidence="1">
    <location>
        <position position="438"/>
    </location>
</feature>
<feature type="binding site" evidence="1">
    <location>
        <begin position="116"/>
        <end position="117"/>
    </location>
    <ligand>
        <name>substrate</name>
    </ligand>
</feature>
<feature type="modified residue" description="Phosphoserine" evidence="2">
    <location>
        <position position="198"/>
    </location>
</feature>
<feature type="glycosylation site" description="N-linked (GlcNAc...) asparagine">
    <location>
        <position position="57"/>
    </location>
</feature>
<feature type="glycosylation site" description="N-linked (GlcNAc...) asparagine">
    <location>
        <position position="106"/>
    </location>
</feature>
<feature type="glycosylation site" description="N-linked (GlcNAc...) asparagine">
    <location>
        <position position="241"/>
    </location>
</feature>
<feature type="glycosylation site" description="N-linked (GlcNAc...) asparagine">
    <location>
        <position position="256"/>
    </location>
</feature>
<feature type="glycosylation site" description="N-linked (GlcNAc...) asparagine">
    <location>
        <position position="341"/>
    </location>
</feature>
<feature type="glycosylation site" description="N-linked (GlcNAc...) asparagine">
    <location>
        <position position="455"/>
    </location>
</feature>
<feature type="glycosylation site" description="N-linked (GlcNAc...) asparagine">
    <location>
        <position position="481"/>
    </location>
</feature>
<feature type="glycosylation site" description="N-linked (GlcNAc...) asparagine">
    <location>
        <position position="486"/>
    </location>
</feature>
<feature type="disulfide bond" evidence="1">
    <location>
        <begin position="65"/>
        <end position="92"/>
    </location>
</feature>
<feature type="disulfide bond" evidence="1">
    <location>
        <begin position="252"/>
        <end position="263"/>
    </location>
</feature>
<feature type="disulfide bond" evidence="1">
    <location>
        <begin position="400"/>
        <end position="519"/>
    </location>
</feature>
<feature type="disulfide bond" description="Interchain" evidence="1">
    <location>
        <position position="571"/>
    </location>
</feature>
<comment type="function">
    <text evidence="1">Esterase with broad substrate specificity. Contributes to the inactivation of the neurotransmitter acetylcholine. Can degrade neurotoxic organophosphate esters (By similarity).</text>
</comment>
<comment type="catalytic activity">
    <reaction>
        <text>an acylcholine + H2O = a carboxylate + choline + H(+)</text>
        <dbReference type="Rhea" id="RHEA:21964"/>
        <dbReference type="ChEBI" id="CHEBI:15354"/>
        <dbReference type="ChEBI" id="CHEBI:15377"/>
        <dbReference type="ChEBI" id="CHEBI:15378"/>
        <dbReference type="ChEBI" id="CHEBI:29067"/>
        <dbReference type="ChEBI" id="CHEBI:35287"/>
        <dbReference type="EC" id="3.1.1.8"/>
    </reaction>
</comment>
<comment type="subunit">
    <text evidence="1">Homotetramer; disulfide-linked. Dimer of dimers (By similarity).</text>
</comment>
<comment type="subcellular location">
    <subcellularLocation>
        <location evidence="4">Secreted</location>
    </subcellularLocation>
</comment>
<comment type="tissue specificity">
    <text evidence="4">Detected in blood plasma (at protein level). Present in most cells except erythrocytes.</text>
</comment>
<comment type="similarity">
    <text evidence="5">Belongs to the type-B carboxylesterase/lipase family.</text>
</comment>
<gene>
    <name type="primary">BCHE</name>
</gene>
<proteinExistence type="evidence at protein level"/>
<evidence type="ECO:0000250" key="1"/>
<evidence type="ECO:0000250" key="2">
    <source>
        <dbReference type="UniProtKB" id="P06276"/>
    </source>
</evidence>
<evidence type="ECO:0000255" key="3">
    <source>
        <dbReference type="PROSITE-ProRule" id="PRU10039"/>
    </source>
</evidence>
<evidence type="ECO:0000269" key="4">
    <source ref="1"/>
</evidence>
<evidence type="ECO:0000305" key="5"/>
<organism>
    <name type="scientific">Equus caballus</name>
    <name type="common">Horse</name>
    <dbReference type="NCBI Taxonomy" id="9796"/>
    <lineage>
        <taxon>Eukaryota</taxon>
        <taxon>Metazoa</taxon>
        <taxon>Chordata</taxon>
        <taxon>Craniata</taxon>
        <taxon>Vertebrata</taxon>
        <taxon>Euteleostomi</taxon>
        <taxon>Mammalia</taxon>
        <taxon>Eutheria</taxon>
        <taxon>Laurasiatheria</taxon>
        <taxon>Perissodactyla</taxon>
        <taxon>Equidae</taxon>
        <taxon>Equus</taxon>
    </lineage>
</organism>
<accession>P81908</accession>
<keyword id="KW-0903">Direct protein sequencing</keyword>
<keyword id="KW-1015">Disulfide bond</keyword>
<keyword id="KW-0325">Glycoprotein</keyword>
<keyword id="KW-0378">Hydrolase</keyword>
<keyword id="KW-0597">Phosphoprotein</keyword>
<keyword id="KW-1185">Reference proteome</keyword>
<keyword id="KW-0964">Secreted</keyword>
<keyword id="KW-0719">Serine esterase</keyword>
<sequence>EEDIIITTKNGKVRGMNLPVLGGTVTAFLGIPYAQPPLGRLRFKKPQSLTKWSNIWNATKYANSCYQNTDQSFPGFLGSEMWNPNTELSEDCLYLNVWIPAPKPKNATVMIWIYGGGFQTGTSSLPVYDGKFLARVERVIVVSMNYRVGALGFLALSENPEAPGNMGLFDQQLALQWVQKNIAAFGGNPRSVTLFGESAGAASVSLHLLSPRSQPLFTRAILQSGSSNAPWAVTSLYEARNRTLTLAKRMGCSRDNETEMIKCLRDKDPQEILLNEVFVVPYDTLLSVNFGPTVDGDFLTDMPDTLLQLGQFKRTQILVGVNKDEGTAFLVYGAPGFSKDNNSIITRKEFQEGLKIFFPRVSEFGRESILFHYMDWLDDQRAENYREALDDVVGDYNIICPALEFTRKFSELGNDAFFYYFEHRSTKLPWPEWMGVMHGYEIEFVFGLPLERRVNYTRAEEILSRSIMKRWANFAKYGNPNGTQNNSTRWPVFKSTEQKYLTLNTESPKVYTKLRAQQCRFWTLFFPKVLELTGNIDEAEREWKAGFHRWNNYMMDWKNQFNDYTSKKESCSDF</sequence>
<name>CHLE_HORSE</name>
<reference key="1">
    <citation type="book" date="1998" name="Structure and function of cholinesterases and related proteins">
        <title>Amino acid sequence of horse serum butyrycholinesterase.</title>
        <editorList>
            <person name="Doctor B.P."/>
            <person name="Taylor P."/>
            <person name="Quinn D.M."/>
            <person name="Rotundo R.L."/>
            <person name="Gentry M.K."/>
        </editorList>
        <authorList>
            <person name="Moorad D.R."/>
            <person name="Luo C."/>
            <person name="Garcia G.E."/>
            <person name="Doctor B.P."/>
        </authorList>
    </citation>
    <scope>PROTEIN SEQUENCE</scope>
    <scope>SUBCELLULAR LOCATION</scope>
    <scope>TISSUE SPECIFICITY</scope>
    <source>
        <tissue>Plasma</tissue>
    </source>
</reference>
<dbReference type="EC" id="3.1.1.8"/>
<dbReference type="SMR" id="P81908"/>
<dbReference type="FunCoup" id="P81908">
    <property type="interactions" value="10"/>
</dbReference>
<dbReference type="STRING" id="9796.ENSECAP00000000166"/>
<dbReference type="BindingDB" id="P81908"/>
<dbReference type="ChEMBL" id="CHEMBL5763"/>
<dbReference type="DrugCentral" id="P81908"/>
<dbReference type="ESTHER" id="horse-BCHE">
    <property type="family name" value="BCHE"/>
</dbReference>
<dbReference type="MEROPS" id="S09.980"/>
<dbReference type="GlyCosmos" id="P81908">
    <property type="glycosylation" value="8 sites, No reported glycans"/>
</dbReference>
<dbReference type="PaxDb" id="9796-ENSECAP00000000166"/>
<dbReference type="InParanoid" id="P81908"/>
<dbReference type="BRENDA" id="3.1.1.8">
    <property type="organism ID" value="2120"/>
</dbReference>
<dbReference type="Proteomes" id="UP000002281">
    <property type="component" value="Unplaced"/>
</dbReference>
<dbReference type="GO" id="GO:0005615">
    <property type="term" value="C:extracellular space"/>
    <property type="evidence" value="ECO:0000318"/>
    <property type="project" value="GO_Central"/>
</dbReference>
<dbReference type="GO" id="GO:0005886">
    <property type="term" value="C:plasma membrane"/>
    <property type="evidence" value="ECO:0000318"/>
    <property type="project" value="GO_Central"/>
</dbReference>
<dbReference type="GO" id="GO:0003990">
    <property type="term" value="F:acetylcholinesterase activity"/>
    <property type="evidence" value="ECO:0000250"/>
    <property type="project" value="UniProtKB"/>
</dbReference>
<dbReference type="GO" id="GO:0004104">
    <property type="term" value="F:cholinesterase activity"/>
    <property type="evidence" value="ECO:0000250"/>
    <property type="project" value="UniProtKB"/>
</dbReference>
<dbReference type="GO" id="GO:0006581">
    <property type="term" value="P:acetylcholine catabolic process"/>
    <property type="evidence" value="ECO:0000318"/>
    <property type="project" value="GO_Central"/>
</dbReference>
<dbReference type="GO" id="GO:0019695">
    <property type="term" value="P:choline metabolic process"/>
    <property type="evidence" value="ECO:0000318"/>
    <property type="project" value="GO_Central"/>
</dbReference>
<dbReference type="CDD" id="cd00312">
    <property type="entry name" value="Esterase_lipase"/>
    <property type="match status" value="1"/>
</dbReference>
<dbReference type="FunFam" id="3.40.50.1820:FF:000029">
    <property type="entry name" value="Acetylcholinesterase"/>
    <property type="match status" value="1"/>
</dbReference>
<dbReference type="Gene3D" id="3.40.50.1820">
    <property type="entry name" value="alpha/beta hydrolase"/>
    <property type="match status" value="1"/>
</dbReference>
<dbReference type="InterPro" id="IPR029058">
    <property type="entry name" value="AB_hydrolase_fold"/>
</dbReference>
<dbReference type="InterPro" id="IPR050654">
    <property type="entry name" value="AChE-related_enzymes"/>
</dbReference>
<dbReference type="InterPro" id="IPR014788">
    <property type="entry name" value="AChE_tetra"/>
</dbReference>
<dbReference type="InterPro" id="IPR002018">
    <property type="entry name" value="CarbesteraseB"/>
</dbReference>
<dbReference type="InterPro" id="IPR019826">
    <property type="entry name" value="Carboxylesterase_B_AS"/>
</dbReference>
<dbReference type="InterPro" id="IPR019819">
    <property type="entry name" value="Carboxylesterase_B_CS"/>
</dbReference>
<dbReference type="InterPro" id="IPR000997">
    <property type="entry name" value="Cholinesterase"/>
</dbReference>
<dbReference type="PANTHER" id="PTHR43918">
    <property type="entry name" value="ACETYLCHOLINESTERASE"/>
    <property type="match status" value="1"/>
</dbReference>
<dbReference type="PANTHER" id="PTHR43918:SF5">
    <property type="entry name" value="CHOLINESTERASE"/>
    <property type="match status" value="1"/>
</dbReference>
<dbReference type="Pfam" id="PF08674">
    <property type="entry name" value="AChE_tetra"/>
    <property type="match status" value="1"/>
</dbReference>
<dbReference type="Pfam" id="PF00135">
    <property type="entry name" value="COesterase"/>
    <property type="match status" value="1"/>
</dbReference>
<dbReference type="PRINTS" id="PR00878">
    <property type="entry name" value="CHOLNESTRASE"/>
</dbReference>
<dbReference type="SUPFAM" id="SSF53474">
    <property type="entry name" value="alpha/beta-Hydrolases"/>
    <property type="match status" value="1"/>
</dbReference>
<dbReference type="PROSITE" id="PS00122">
    <property type="entry name" value="CARBOXYLESTERASE_B_1"/>
    <property type="match status" value="1"/>
</dbReference>
<dbReference type="PROSITE" id="PS00941">
    <property type="entry name" value="CARBOXYLESTERASE_B_2"/>
    <property type="match status" value="1"/>
</dbReference>
<protein>
    <recommendedName>
        <fullName>Cholinesterase</fullName>
        <ecNumber>3.1.1.8</ecNumber>
    </recommendedName>
    <alternativeName>
        <fullName>Acylcholine acylhydrolase</fullName>
    </alternativeName>
    <alternativeName>
        <fullName>Butyrylcholine esterase</fullName>
    </alternativeName>
    <alternativeName>
        <fullName>Choline esterase II</fullName>
    </alternativeName>
    <alternativeName>
        <fullName>EQ-BCHE</fullName>
    </alternativeName>
    <alternativeName>
        <fullName>Pseudocholinesterase</fullName>
    </alternativeName>
</protein>